<gene>
    <name type="primary">HRAS</name>
    <name type="synonym">HRAS1</name>
</gene>
<name>RASH_CHICK</name>
<feature type="chain" id="PRO_0000434307" description="GTPase HRas">
    <location>
        <begin position="1"/>
        <end position="186"/>
    </location>
</feature>
<feature type="initiator methionine" description="Removed; alternate" evidence="2">
    <location>
        <position position="1"/>
    </location>
</feature>
<feature type="chain" id="PRO_0000043002" description="GTPase HRas, N-terminally processed">
    <location>
        <begin position="2"/>
        <end position="186"/>
    </location>
</feature>
<feature type="propeptide" id="PRO_0000043003" description="Removed in mature form" evidence="1">
    <location>
        <begin position="187"/>
        <end position="189"/>
    </location>
</feature>
<feature type="region of interest" description="Hypervariable region">
    <location>
        <begin position="166"/>
        <end position="185"/>
    </location>
</feature>
<feature type="short sequence motif" description="Effector region">
    <location>
        <begin position="32"/>
        <end position="40"/>
    </location>
</feature>
<feature type="binding site">
    <location>
        <begin position="10"/>
        <end position="17"/>
    </location>
    <ligand>
        <name>GTP</name>
        <dbReference type="ChEBI" id="CHEBI:37565"/>
    </ligand>
</feature>
<feature type="binding site">
    <location>
        <begin position="57"/>
        <end position="61"/>
    </location>
    <ligand>
        <name>GTP</name>
        <dbReference type="ChEBI" id="CHEBI:37565"/>
    </ligand>
</feature>
<feature type="binding site">
    <location>
        <begin position="116"/>
        <end position="119"/>
    </location>
    <ligand>
        <name>GTP</name>
        <dbReference type="ChEBI" id="CHEBI:37565"/>
    </ligand>
</feature>
<feature type="modified residue" description="N-acetylmethionine" evidence="2">
    <location>
        <position position="1"/>
    </location>
</feature>
<feature type="modified residue" description="N-acetylthreonine; in GTPase HRas, N-terminally processed" evidence="2">
    <location>
        <position position="2"/>
    </location>
</feature>
<feature type="modified residue" description="S-nitrosocysteine" evidence="2">
    <location>
        <position position="118"/>
    </location>
</feature>
<feature type="modified residue" description="Cysteine methyl ester" evidence="2">
    <location>
        <position position="186"/>
    </location>
</feature>
<feature type="lipid moiety-binding region" description="S-palmitoyl cysteine" evidence="2">
    <location>
        <position position="181"/>
    </location>
</feature>
<feature type="lipid moiety-binding region" description="S-palmitoyl cysteine" evidence="2">
    <location>
        <position position="184"/>
    </location>
</feature>
<feature type="lipid moiety-binding region" description="S-farnesyl cysteine" evidence="2">
    <location>
        <position position="186"/>
    </location>
</feature>
<feature type="mutagenesis site" description="Loss of GTP-binding activity." evidence="3">
    <original>R</original>
    <variation>A</variation>
    <location>
        <position position="164"/>
    </location>
</feature>
<comment type="function">
    <text>Ras proteins bind GDP/GTP and possess intrinsic GTPase activity.</text>
</comment>
<comment type="catalytic activity">
    <reaction evidence="2">
        <text>GTP + H2O = GDP + phosphate + H(+)</text>
        <dbReference type="Rhea" id="RHEA:19669"/>
        <dbReference type="ChEBI" id="CHEBI:15377"/>
        <dbReference type="ChEBI" id="CHEBI:15378"/>
        <dbReference type="ChEBI" id="CHEBI:37565"/>
        <dbReference type="ChEBI" id="CHEBI:43474"/>
        <dbReference type="ChEBI" id="CHEBI:58189"/>
        <dbReference type="EC" id="3.6.5.2"/>
    </reaction>
</comment>
<comment type="activity regulation">
    <text>Alternates between an inactive form bound to GDP and an active form bound to GTP. Activated by a guanine nucleotide-exchange factor (GEF) and inactivated by a GTPase-activating protein (GAP).</text>
</comment>
<comment type="subcellular location">
    <subcellularLocation>
        <location evidence="1">Cell membrane</location>
        <topology evidence="1">Lipid-anchor</topology>
        <orientation evidence="1">Cytoplasmic side</orientation>
    </subcellularLocation>
    <subcellularLocation>
        <location evidence="1">Golgi apparatus membrane</location>
        <topology evidence="1">Lipid-anchor</topology>
    </subcellularLocation>
    <text evidence="1">Shuttles between the plasma membrane and the Golgi apparatus.</text>
</comment>
<comment type="PTM">
    <text evidence="2">Palmitoylated by the ZDHHC9-GOLGA7 complex. A continuous cycle of de- and re-palmitoylation regulates rapid exchange between plasma membrane and Golgi.</text>
</comment>
<comment type="similarity">
    <text evidence="4">Belongs to the small GTPase superfamily. Ras family.</text>
</comment>
<accession>P08642</accession>
<dbReference type="EC" id="3.6.5.2" evidence="2"/>
<dbReference type="EMBL" id="X03578">
    <property type="protein sequence ID" value="CAA27258.1"/>
    <property type="molecule type" value="mRNA"/>
</dbReference>
<dbReference type="PIR" id="A24617">
    <property type="entry name" value="TVCHRS"/>
</dbReference>
<dbReference type="RefSeq" id="NP_001383675.1">
    <property type="nucleotide sequence ID" value="NM_001396746.1"/>
</dbReference>
<dbReference type="RefSeq" id="NP_001383676.1">
    <property type="nucleotide sequence ID" value="NM_001396747.1"/>
</dbReference>
<dbReference type="RefSeq" id="NP_001383677.1">
    <property type="nucleotide sequence ID" value="NM_001396748.1"/>
</dbReference>
<dbReference type="RefSeq" id="NP_990623.1">
    <property type="nucleotide sequence ID" value="NM_205292.2"/>
</dbReference>
<dbReference type="RefSeq" id="XP_046773855.1">
    <property type="nucleotide sequence ID" value="XM_046917899.1"/>
</dbReference>
<dbReference type="RefSeq" id="XP_046773856.1">
    <property type="nucleotide sequence ID" value="XM_046917900.1"/>
</dbReference>
<dbReference type="RefSeq" id="XP_046773857.1">
    <property type="nucleotide sequence ID" value="XM_046917901.1"/>
</dbReference>
<dbReference type="RefSeq" id="XP_046773858.1">
    <property type="nucleotide sequence ID" value="XM_046917902.1"/>
</dbReference>
<dbReference type="RefSeq" id="XP_046773859.1">
    <property type="nucleotide sequence ID" value="XM_046917903.1"/>
</dbReference>
<dbReference type="RefSeq" id="XP_046797430.1">
    <property type="nucleotide sequence ID" value="XM_046941474.1"/>
</dbReference>
<dbReference type="RefSeq" id="XP_046797431.1">
    <property type="nucleotide sequence ID" value="XM_046941475.1"/>
</dbReference>
<dbReference type="RefSeq" id="XP_046797432.1">
    <property type="nucleotide sequence ID" value="XM_046941476.1"/>
</dbReference>
<dbReference type="RefSeq" id="XP_046797433.1">
    <property type="nucleotide sequence ID" value="XM_046941477.1"/>
</dbReference>
<dbReference type="RefSeq" id="XP_046797434.1">
    <property type="nucleotide sequence ID" value="XM_046941478.1"/>
</dbReference>
<dbReference type="RefSeq" id="XP_046797435.1">
    <property type="nucleotide sequence ID" value="XM_046941479.1"/>
</dbReference>
<dbReference type="RefSeq" id="XP_046797436.1">
    <property type="nucleotide sequence ID" value="XM_046941480.1"/>
</dbReference>
<dbReference type="RefSeq" id="XP_046797437.1">
    <property type="nucleotide sequence ID" value="XM_046941481.1"/>
</dbReference>
<dbReference type="BMRB" id="P08642"/>
<dbReference type="SMR" id="P08642"/>
<dbReference type="FunCoup" id="P08642">
    <property type="interactions" value="1099"/>
</dbReference>
<dbReference type="STRING" id="9031.ENSGALP00000073065"/>
<dbReference type="PaxDb" id="9031-ENSGALP00000011140"/>
<dbReference type="Ensembl" id="ENSGALT00010062441.1">
    <property type="protein sequence ID" value="ENSGALP00010038607.1"/>
    <property type="gene ID" value="ENSGALG00010025590.1"/>
</dbReference>
<dbReference type="GeneID" id="396229"/>
<dbReference type="KEGG" id="gga:396229"/>
<dbReference type="CTD" id="3265"/>
<dbReference type="VEuPathDB" id="HostDB:geneid_396229"/>
<dbReference type="eggNOG" id="KOG0395">
    <property type="taxonomic scope" value="Eukaryota"/>
</dbReference>
<dbReference type="GeneTree" id="ENSGT00940000155653"/>
<dbReference type="HOGENOM" id="CLU_041217_9_8_1"/>
<dbReference type="InParanoid" id="P08642"/>
<dbReference type="OMA" id="HYREQIR"/>
<dbReference type="OrthoDB" id="5976022at2759"/>
<dbReference type="PhylomeDB" id="P08642"/>
<dbReference type="TreeFam" id="TF312796"/>
<dbReference type="Reactome" id="R-GGA-1169092">
    <property type="pathway name" value="Activation of RAS in B cells"/>
</dbReference>
<dbReference type="Reactome" id="R-GGA-1250347">
    <property type="pathway name" value="SHC1 events in ERBB4 signaling"/>
</dbReference>
<dbReference type="Reactome" id="R-GGA-1433557">
    <property type="pathway name" value="Signaling by SCF-KIT"/>
</dbReference>
<dbReference type="Reactome" id="R-GGA-171007">
    <property type="pathway name" value="p38MAPK events"/>
</dbReference>
<dbReference type="Reactome" id="R-GGA-179812">
    <property type="pathway name" value="GRB2 events in EGFR signaling"/>
</dbReference>
<dbReference type="Reactome" id="R-GGA-180336">
    <property type="pathway name" value="SHC1 events in EGFR signaling"/>
</dbReference>
<dbReference type="Reactome" id="R-GGA-186763">
    <property type="pathway name" value="Downstream signal transduction"/>
</dbReference>
<dbReference type="Reactome" id="R-GGA-1963640">
    <property type="pathway name" value="GRB2 events in ERBB2 signaling"/>
</dbReference>
<dbReference type="Reactome" id="R-GGA-210993">
    <property type="pathway name" value="Tie2 Signaling"/>
</dbReference>
<dbReference type="Reactome" id="R-GGA-2179392">
    <property type="pathway name" value="EGFR Transactivation by Gastrin"/>
</dbReference>
<dbReference type="Reactome" id="R-GGA-2424491">
    <property type="pathway name" value="DAP12 signaling"/>
</dbReference>
<dbReference type="Reactome" id="R-GGA-2871796">
    <property type="pathway name" value="FCERI mediated MAPK activation"/>
</dbReference>
<dbReference type="Reactome" id="R-GGA-375165">
    <property type="pathway name" value="NCAM signaling for neurite out-growth"/>
</dbReference>
<dbReference type="Reactome" id="R-GGA-3928662">
    <property type="pathway name" value="EPHB-mediated forward signaling"/>
</dbReference>
<dbReference type="Reactome" id="R-GGA-5218921">
    <property type="pathway name" value="VEGFR2 mediated cell proliferation"/>
</dbReference>
<dbReference type="Reactome" id="R-GGA-5621575">
    <property type="pathway name" value="CD209 (DC-SIGN) signaling"/>
</dbReference>
<dbReference type="Reactome" id="R-GGA-5654688">
    <property type="pathway name" value="SHC-mediated cascade:FGFR1"/>
</dbReference>
<dbReference type="Reactome" id="R-GGA-5654693">
    <property type="pathway name" value="FRS-mediated FGFR1 signaling"/>
</dbReference>
<dbReference type="Reactome" id="R-GGA-5654699">
    <property type="pathway name" value="SHC-mediated cascade:FGFR2"/>
</dbReference>
<dbReference type="Reactome" id="R-GGA-5654700">
    <property type="pathway name" value="FRS-mediated FGFR2 signaling"/>
</dbReference>
<dbReference type="Reactome" id="R-GGA-5654704">
    <property type="pathway name" value="SHC-mediated cascade:FGFR3"/>
</dbReference>
<dbReference type="Reactome" id="R-GGA-5654706">
    <property type="pathway name" value="FRS-mediated FGFR3 signaling"/>
</dbReference>
<dbReference type="Reactome" id="R-GGA-5654712">
    <property type="pathway name" value="FRS-mediated FGFR4 signaling"/>
</dbReference>
<dbReference type="Reactome" id="R-GGA-5654719">
    <property type="pathway name" value="SHC-mediated cascade:FGFR4"/>
</dbReference>
<dbReference type="Reactome" id="R-GGA-5658442">
    <property type="pathway name" value="Regulation of RAS by GAPs"/>
</dbReference>
<dbReference type="Reactome" id="R-GGA-5673000">
    <property type="pathway name" value="RAF activation"/>
</dbReference>
<dbReference type="Reactome" id="R-GGA-5673001">
    <property type="pathway name" value="RAF/MAP kinase cascade"/>
</dbReference>
<dbReference type="Reactome" id="R-GGA-5674135">
    <property type="pathway name" value="MAP2K and MAPK activation"/>
</dbReference>
<dbReference type="Reactome" id="R-GGA-5675221">
    <property type="pathway name" value="Negative regulation of MAPK pathway"/>
</dbReference>
<dbReference type="Reactome" id="R-GGA-8849471">
    <property type="pathway name" value="PTK6 Regulates RHO GTPases, RAS GTPase and MAP kinases"/>
</dbReference>
<dbReference type="Reactome" id="R-GGA-8851805">
    <property type="pathway name" value="MET activates RAS signaling"/>
</dbReference>
<dbReference type="Reactome" id="R-GGA-9607240">
    <property type="pathway name" value="FLT3 Signaling"/>
</dbReference>
<dbReference type="Reactome" id="R-GGA-9634635">
    <property type="pathway name" value="Estrogen-stimulated signaling through PRKCZ"/>
</dbReference>
<dbReference type="Reactome" id="R-GGA-9648002">
    <property type="pathway name" value="RAS processing"/>
</dbReference>
<dbReference type="PRO" id="PR:P08642"/>
<dbReference type="Proteomes" id="UP000000539">
    <property type="component" value="Chromosome 5"/>
</dbReference>
<dbReference type="Bgee" id="ENSGALG00000029260">
    <property type="expression patterns" value="Expressed in brain and 13 other cell types or tissues"/>
</dbReference>
<dbReference type="GO" id="GO:0036064">
    <property type="term" value="C:ciliary basal body"/>
    <property type="evidence" value="ECO:0007669"/>
    <property type="project" value="Ensembl"/>
</dbReference>
<dbReference type="GO" id="GO:0005829">
    <property type="term" value="C:cytosol"/>
    <property type="evidence" value="ECO:0007669"/>
    <property type="project" value="Ensembl"/>
</dbReference>
<dbReference type="GO" id="GO:0098978">
    <property type="term" value="C:glutamatergic synapse"/>
    <property type="evidence" value="ECO:0007669"/>
    <property type="project" value="Ensembl"/>
</dbReference>
<dbReference type="GO" id="GO:0000139">
    <property type="term" value="C:Golgi membrane"/>
    <property type="evidence" value="ECO:0007669"/>
    <property type="project" value="UniProtKB-SubCell"/>
</dbReference>
<dbReference type="GO" id="GO:1905360">
    <property type="term" value="C:GTPase complex"/>
    <property type="evidence" value="ECO:0007669"/>
    <property type="project" value="Ensembl"/>
</dbReference>
<dbReference type="GO" id="GO:0005654">
    <property type="term" value="C:nucleoplasm"/>
    <property type="evidence" value="ECO:0007669"/>
    <property type="project" value="Ensembl"/>
</dbReference>
<dbReference type="GO" id="GO:0005886">
    <property type="term" value="C:plasma membrane"/>
    <property type="evidence" value="ECO:0000318"/>
    <property type="project" value="GO_Central"/>
</dbReference>
<dbReference type="GO" id="GO:0003925">
    <property type="term" value="F:G protein activity"/>
    <property type="evidence" value="ECO:0007669"/>
    <property type="project" value="UniProtKB-EC"/>
</dbReference>
<dbReference type="GO" id="GO:0019003">
    <property type="term" value="F:GDP binding"/>
    <property type="evidence" value="ECO:0000318"/>
    <property type="project" value="GO_Central"/>
</dbReference>
<dbReference type="GO" id="GO:0005525">
    <property type="term" value="F:GTP binding"/>
    <property type="evidence" value="ECO:0000318"/>
    <property type="project" value="GO_Central"/>
</dbReference>
<dbReference type="GO" id="GO:0003924">
    <property type="term" value="F:GTPase activity"/>
    <property type="evidence" value="ECO:0000318"/>
    <property type="project" value="GO_Central"/>
</dbReference>
<dbReference type="GO" id="GO:0160185">
    <property type="term" value="F:phospholipase C activator activity"/>
    <property type="evidence" value="ECO:0007669"/>
    <property type="project" value="Ensembl"/>
</dbReference>
<dbReference type="GO" id="GO:0043495">
    <property type="term" value="F:protein-membrane adaptor activity"/>
    <property type="evidence" value="ECO:0007669"/>
    <property type="project" value="Ensembl"/>
</dbReference>
<dbReference type="GO" id="GO:0060612">
    <property type="term" value="P:adipose tissue development"/>
    <property type="evidence" value="ECO:0007669"/>
    <property type="project" value="Ensembl"/>
</dbReference>
<dbReference type="GO" id="GO:0071480">
    <property type="term" value="P:cellular response to gamma radiation"/>
    <property type="evidence" value="ECO:0007669"/>
    <property type="project" value="Ensembl"/>
</dbReference>
<dbReference type="GO" id="GO:0042832">
    <property type="term" value="P:defense response to protozoan"/>
    <property type="evidence" value="ECO:0007669"/>
    <property type="project" value="Ensembl"/>
</dbReference>
<dbReference type="GO" id="GO:0006897">
    <property type="term" value="P:endocytosis"/>
    <property type="evidence" value="ECO:0007669"/>
    <property type="project" value="Ensembl"/>
</dbReference>
<dbReference type="GO" id="GO:0048144">
    <property type="term" value="P:fibroblast proliferation"/>
    <property type="evidence" value="ECO:0007669"/>
    <property type="project" value="Ensembl"/>
</dbReference>
<dbReference type="GO" id="GO:0008286">
    <property type="term" value="P:insulin receptor signaling pathway"/>
    <property type="evidence" value="ECO:0007669"/>
    <property type="project" value="Ensembl"/>
</dbReference>
<dbReference type="GO" id="GO:0097193">
    <property type="term" value="P:intrinsic apoptotic signaling pathway"/>
    <property type="evidence" value="ECO:0007669"/>
    <property type="project" value="Ensembl"/>
</dbReference>
<dbReference type="GO" id="GO:0042552">
    <property type="term" value="P:myelination"/>
    <property type="evidence" value="ECO:0007669"/>
    <property type="project" value="Ensembl"/>
</dbReference>
<dbReference type="GO" id="GO:0008285">
    <property type="term" value="P:negative regulation of cell population proliferation"/>
    <property type="evidence" value="ECO:0007669"/>
    <property type="project" value="Ensembl"/>
</dbReference>
<dbReference type="GO" id="GO:0010629">
    <property type="term" value="P:negative regulation of gene expression"/>
    <property type="evidence" value="ECO:0007669"/>
    <property type="project" value="Ensembl"/>
</dbReference>
<dbReference type="GO" id="GO:0043524">
    <property type="term" value="P:negative regulation of neuron apoptotic process"/>
    <property type="evidence" value="ECO:0007669"/>
    <property type="project" value="Ensembl"/>
</dbReference>
<dbReference type="GO" id="GO:0051402">
    <property type="term" value="P:neuron apoptotic process"/>
    <property type="evidence" value="ECO:0007669"/>
    <property type="project" value="Ensembl"/>
</dbReference>
<dbReference type="GO" id="GO:0090402">
    <property type="term" value="P:oncogene-induced cell senescence"/>
    <property type="evidence" value="ECO:0007669"/>
    <property type="project" value="Ensembl"/>
</dbReference>
<dbReference type="GO" id="GO:0030335">
    <property type="term" value="P:positive regulation of cell migration"/>
    <property type="evidence" value="ECO:0007669"/>
    <property type="project" value="Ensembl"/>
</dbReference>
<dbReference type="GO" id="GO:0050679">
    <property type="term" value="P:positive regulation of epithelial cell proliferation"/>
    <property type="evidence" value="ECO:0007669"/>
    <property type="project" value="Ensembl"/>
</dbReference>
<dbReference type="GO" id="GO:0070374">
    <property type="term" value="P:positive regulation of ERK1 and ERK2 cascade"/>
    <property type="evidence" value="ECO:0007669"/>
    <property type="project" value="Ensembl"/>
</dbReference>
<dbReference type="GO" id="GO:0048146">
    <property type="term" value="P:positive regulation of fibroblast proliferation"/>
    <property type="evidence" value="ECO:0007669"/>
    <property type="project" value="Ensembl"/>
</dbReference>
<dbReference type="GO" id="GO:0046330">
    <property type="term" value="P:positive regulation of JNK cascade"/>
    <property type="evidence" value="ECO:0007669"/>
    <property type="project" value="Ensembl"/>
</dbReference>
<dbReference type="GO" id="GO:2000630">
    <property type="term" value="P:positive regulation of miRNA metabolic process"/>
    <property type="evidence" value="ECO:0007669"/>
    <property type="project" value="Ensembl"/>
</dbReference>
<dbReference type="GO" id="GO:0090314">
    <property type="term" value="P:positive regulation of protein targeting to membrane"/>
    <property type="evidence" value="ECO:0007669"/>
    <property type="project" value="Ensembl"/>
</dbReference>
<dbReference type="GO" id="GO:1900029">
    <property type="term" value="P:positive regulation of ruffle assembly"/>
    <property type="evidence" value="ECO:0007669"/>
    <property type="project" value="Ensembl"/>
</dbReference>
<dbReference type="GO" id="GO:0045944">
    <property type="term" value="P:positive regulation of transcription by RNA polymerase II"/>
    <property type="evidence" value="ECO:0007669"/>
    <property type="project" value="Ensembl"/>
</dbReference>
<dbReference type="GO" id="GO:0032729">
    <property type="term" value="P:positive regulation of type II interferon production"/>
    <property type="evidence" value="ECO:0007669"/>
    <property type="project" value="Ensembl"/>
</dbReference>
<dbReference type="GO" id="GO:0090303">
    <property type="term" value="P:positive regulation of wound healing"/>
    <property type="evidence" value="ECO:0007669"/>
    <property type="project" value="Ensembl"/>
</dbReference>
<dbReference type="GO" id="GO:0007265">
    <property type="term" value="P:Ras protein signal transduction"/>
    <property type="evidence" value="ECO:0000318"/>
    <property type="project" value="GO_Central"/>
</dbReference>
<dbReference type="GO" id="GO:0032956">
    <property type="term" value="P:regulation of actin cytoskeleton organization"/>
    <property type="evidence" value="ECO:0007669"/>
    <property type="project" value="Ensembl"/>
</dbReference>
<dbReference type="GO" id="GO:0051726">
    <property type="term" value="P:regulation of cell cycle"/>
    <property type="evidence" value="ECO:0007669"/>
    <property type="project" value="Ensembl"/>
</dbReference>
<dbReference type="GO" id="GO:0048169">
    <property type="term" value="P:regulation of long-term neuronal synaptic plasticity"/>
    <property type="evidence" value="ECO:0007669"/>
    <property type="project" value="Ensembl"/>
</dbReference>
<dbReference type="GO" id="GO:0098696">
    <property type="term" value="P:regulation of neurotransmitter receptor localization to postsynaptic specialization membrane"/>
    <property type="evidence" value="ECO:0007669"/>
    <property type="project" value="Ensembl"/>
</dbReference>
<dbReference type="GO" id="GO:0014044">
    <property type="term" value="P:Schwann cell development"/>
    <property type="evidence" value="ECO:0007669"/>
    <property type="project" value="Ensembl"/>
</dbReference>
<dbReference type="GO" id="GO:0050852">
    <property type="term" value="P:T cell receptor signaling pathway"/>
    <property type="evidence" value="ECO:0007669"/>
    <property type="project" value="Ensembl"/>
</dbReference>
<dbReference type="GO" id="GO:0042088">
    <property type="term" value="P:T-helper 1 type immune response"/>
    <property type="evidence" value="ECO:0007669"/>
    <property type="project" value="Ensembl"/>
</dbReference>
<dbReference type="CDD" id="cd04138">
    <property type="entry name" value="H_N_K_Ras_like"/>
    <property type="match status" value="1"/>
</dbReference>
<dbReference type="FunFam" id="3.40.50.300:FF:000096">
    <property type="entry name" value="KRAS proto-oncogene, GTPase"/>
    <property type="match status" value="1"/>
</dbReference>
<dbReference type="Gene3D" id="3.40.50.300">
    <property type="entry name" value="P-loop containing nucleotide triphosphate hydrolases"/>
    <property type="match status" value="1"/>
</dbReference>
<dbReference type="InterPro" id="IPR027417">
    <property type="entry name" value="P-loop_NTPase"/>
</dbReference>
<dbReference type="InterPro" id="IPR005225">
    <property type="entry name" value="Small_GTP-bd"/>
</dbReference>
<dbReference type="InterPro" id="IPR001806">
    <property type="entry name" value="Small_GTPase"/>
</dbReference>
<dbReference type="InterPro" id="IPR020849">
    <property type="entry name" value="Small_GTPase_Ras-type"/>
</dbReference>
<dbReference type="NCBIfam" id="TIGR00231">
    <property type="entry name" value="small_GTP"/>
    <property type="match status" value="1"/>
</dbReference>
<dbReference type="PANTHER" id="PTHR24070">
    <property type="entry name" value="RAS, DI-RAS, AND RHEB FAMILY MEMBERS OF SMALL GTPASE SUPERFAMILY"/>
    <property type="match status" value="1"/>
</dbReference>
<dbReference type="Pfam" id="PF00071">
    <property type="entry name" value="Ras"/>
    <property type="match status" value="1"/>
</dbReference>
<dbReference type="PRINTS" id="PR00449">
    <property type="entry name" value="RASTRNSFRMNG"/>
</dbReference>
<dbReference type="SMART" id="SM00175">
    <property type="entry name" value="RAB"/>
    <property type="match status" value="1"/>
</dbReference>
<dbReference type="SMART" id="SM00173">
    <property type="entry name" value="RAS"/>
    <property type="match status" value="1"/>
</dbReference>
<dbReference type="SMART" id="SM00174">
    <property type="entry name" value="RHO"/>
    <property type="match status" value="1"/>
</dbReference>
<dbReference type="SUPFAM" id="SSF52540">
    <property type="entry name" value="P-loop containing nucleoside triphosphate hydrolases"/>
    <property type="match status" value="1"/>
</dbReference>
<dbReference type="PROSITE" id="PS51421">
    <property type="entry name" value="RAS"/>
    <property type="match status" value="1"/>
</dbReference>
<keyword id="KW-0007">Acetylation</keyword>
<keyword id="KW-1003">Cell membrane</keyword>
<keyword id="KW-0333">Golgi apparatus</keyword>
<keyword id="KW-0342">GTP-binding</keyword>
<keyword id="KW-0378">Hydrolase</keyword>
<keyword id="KW-0449">Lipoprotein</keyword>
<keyword id="KW-0472">Membrane</keyword>
<keyword id="KW-0488">Methylation</keyword>
<keyword id="KW-0547">Nucleotide-binding</keyword>
<keyword id="KW-0564">Palmitate</keyword>
<keyword id="KW-0636">Prenylation</keyword>
<keyword id="KW-0656">Proto-oncogene</keyword>
<keyword id="KW-1185">Reference proteome</keyword>
<keyword id="KW-0702">S-nitrosylation</keyword>
<organism>
    <name type="scientific">Gallus gallus</name>
    <name type="common">Chicken</name>
    <dbReference type="NCBI Taxonomy" id="9031"/>
    <lineage>
        <taxon>Eukaryota</taxon>
        <taxon>Metazoa</taxon>
        <taxon>Chordata</taxon>
        <taxon>Craniata</taxon>
        <taxon>Vertebrata</taxon>
        <taxon>Euteleostomi</taxon>
        <taxon>Archelosauria</taxon>
        <taxon>Archosauria</taxon>
        <taxon>Dinosauria</taxon>
        <taxon>Saurischia</taxon>
        <taxon>Theropoda</taxon>
        <taxon>Coelurosauria</taxon>
        <taxon>Aves</taxon>
        <taxon>Neognathae</taxon>
        <taxon>Galloanserae</taxon>
        <taxon>Galliformes</taxon>
        <taxon>Phasianidae</taxon>
        <taxon>Phasianinae</taxon>
        <taxon>Gallus</taxon>
    </lineage>
</organism>
<sequence>MTEYKLVVVGAGGVGKSALTIQLIQNHFVDEYDPTIEDSYRKQVVIDGETCLLDILDTAGQEEYSAMRDQYMRTGEGFLCVFAINNTKSFEDIHQYREQIKRVKDSDDVPMVLVGNKCDLPARTVETRQAQDLARSYGIPYIETSAKTRQGVEDAFYTLVREIRQHKLRKLNPPDESGPGCMNCKCVIS</sequence>
<reference key="1">
    <citation type="journal article" date="1986" name="EMBO J.">
        <title>Identification of a provirally activated c-Ha-ras oncogene in an avian nephroblastoma via a novel procedure: cDNA cloning of a chimaeric viral-host transcript.</title>
        <authorList>
            <person name="Westaway D."/>
            <person name="Papkoff J."/>
            <person name="Moskovici C."/>
            <person name="Varmus H.E."/>
        </authorList>
    </citation>
    <scope>NUCLEOTIDE SEQUENCE [MRNA]</scope>
    <scope>MUTAGENESIS OF ARG-164</scope>
</reference>
<protein>
    <recommendedName>
        <fullName>GTPase HRas</fullName>
        <ecNumber evidence="2">3.6.5.2</ecNumber>
    </recommendedName>
    <alternativeName>
        <fullName>H-Ras-1</fullName>
    </alternativeName>
    <alternativeName>
        <fullName>Transforming protein p21</fullName>
    </alternativeName>
    <alternativeName>
        <fullName>c-H-ras</fullName>
    </alternativeName>
    <alternativeName>
        <fullName>p21ras</fullName>
    </alternativeName>
    <component>
        <recommendedName>
            <fullName>GTPase HRas, N-terminally processed</fullName>
        </recommendedName>
    </component>
</protein>
<proteinExistence type="evidence at protein level"/>
<evidence type="ECO:0000250" key="1"/>
<evidence type="ECO:0000250" key="2">
    <source>
        <dbReference type="UniProtKB" id="P01112"/>
    </source>
</evidence>
<evidence type="ECO:0000269" key="3">
    <source>
    </source>
</evidence>
<evidence type="ECO:0000305" key="4"/>